<feature type="chain" id="PRO_1000008985" description="Sulfate adenylyltransferase subunit 2">
    <location>
        <begin position="1"/>
        <end position="302"/>
    </location>
</feature>
<feature type="region of interest" description="Disordered" evidence="2">
    <location>
        <begin position="280"/>
        <end position="302"/>
    </location>
</feature>
<comment type="function">
    <text evidence="1">With CysN forms the ATP sulfurylase (ATPS) that catalyzes the adenylation of sulfate producing adenosine 5'-phosphosulfate (APS) and diphosphate, the first enzymatic step in sulfur assimilation pathway. APS synthesis involves the formation of a high-energy phosphoric-sulfuric acid anhydride bond driven by GTP hydrolysis by CysN coupled to ATP hydrolysis by CysD.</text>
</comment>
<comment type="catalytic activity">
    <reaction evidence="1">
        <text>sulfate + ATP + H(+) = adenosine 5'-phosphosulfate + diphosphate</text>
        <dbReference type="Rhea" id="RHEA:18133"/>
        <dbReference type="ChEBI" id="CHEBI:15378"/>
        <dbReference type="ChEBI" id="CHEBI:16189"/>
        <dbReference type="ChEBI" id="CHEBI:30616"/>
        <dbReference type="ChEBI" id="CHEBI:33019"/>
        <dbReference type="ChEBI" id="CHEBI:58243"/>
        <dbReference type="EC" id="2.7.7.4"/>
    </reaction>
</comment>
<comment type="pathway">
    <text evidence="1">Sulfur metabolism; hydrogen sulfide biosynthesis; sulfite from sulfate: step 1/3.</text>
</comment>
<comment type="subunit">
    <text evidence="1">Heterodimer composed of CysD, the smaller subunit, and CysN.</text>
</comment>
<comment type="similarity">
    <text evidence="1">Belongs to the PAPS reductase family. CysD subfamily.</text>
</comment>
<keyword id="KW-0067">ATP-binding</keyword>
<keyword id="KW-0547">Nucleotide-binding</keyword>
<keyword id="KW-0548">Nucleotidyltransferase</keyword>
<keyword id="KW-1185">Reference proteome</keyword>
<keyword id="KW-0808">Transferase</keyword>
<evidence type="ECO:0000255" key="1">
    <source>
        <dbReference type="HAMAP-Rule" id="MF_00064"/>
    </source>
</evidence>
<evidence type="ECO:0000256" key="2">
    <source>
        <dbReference type="SAM" id="MobiDB-lite"/>
    </source>
</evidence>
<sequence>MAGRSLSHLQQLEAESIQIIREVAAEFGNPVMMYSIGKDSSVMLHLARKAFYPGKIPFPLLHVDTGWKFKEMIAFRDAQAKAFGFELLTHTNQEGVEQGVGPFTHGSAKHTDIMKTQGLKQALNKYGFDAAFGGARRDEEKSRAKERVYSFRDKHHRWDPKNQRPELWRTYNGAVNKGESIRVFPLSNWTELDIWQYIYQENIEIVPLYFAAPRAVVNKGGQLIMKDDDRMPLEEGDVESVERVRFRTLGCYPLTAAMPSEADTLEKIIEEMLLTRSSERQGRLIDSDQSASMEQKKRQGYF</sequence>
<organism>
    <name type="scientific">Shewanella frigidimarina (strain NCIMB 400)</name>
    <dbReference type="NCBI Taxonomy" id="318167"/>
    <lineage>
        <taxon>Bacteria</taxon>
        <taxon>Pseudomonadati</taxon>
        <taxon>Pseudomonadota</taxon>
        <taxon>Gammaproteobacteria</taxon>
        <taxon>Alteromonadales</taxon>
        <taxon>Shewanellaceae</taxon>
        <taxon>Shewanella</taxon>
    </lineage>
</organism>
<gene>
    <name evidence="1" type="primary">cysD</name>
    <name type="ordered locus">Sfri_3187</name>
</gene>
<proteinExistence type="inferred from homology"/>
<reference key="1">
    <citation type="submission" date="2006-08" db="EMBL/GenBank/DDBJ databases">
        <title>Complete sequence of Shewanella frigidimarina NCIMB 400.</title>
        <authorList>
            <consortium name="US DOE Joint Genome Institute"/>
            <person name="Copeland A."/>
            <person name="Lucas S."/>
            <person name="Lapidus A."/>
            <person name="Barry K."/>
            <person name="Detter J.C."/>
            <person name="Glavina del Rio T."/>
            <person name="Hammon N."/>
            <person name="Israni S."/>
            <person name="Dalin E."/>
            <person name="Tice H."/>
            <person name="Pitluck S."/>
            <person name="Fredrickson J.K."/>
            <person name="Kolker E."/>
            <person name="McCuel L.A."/>
            <person name="DiChristina T."/>
            <person name="Nealson K.H."/>
            <person name="Newman D."/>
            <person name="Tiedje J.M."/>
            <person name="Zhou J."/>
            <person name="Romine M.F."/>
            <person name="Culley D.E."/>
            <person name="Serres M."/>
            <person name="Chertkov O."/>
            <person name="Brettin T."/>
            <person name="Bruce D."/>
            <person name="Han C."/>
            <person name="Tapia R."/>
            <person name="Gilna P."/>
            <person name="Schmutz J."/>
            <person name="Larimer F."/>
            <person name="Land M."/>
            <person name="Hauser L."/>
            <person name="Kyrpides N."/>
            <person name="Mikhailova N."/>
            <person name="Richardson P."/>
        </authorList>
    </citation>
    <scope>NUCLEOTIDE SEQUENCE [LARGE SCALE GENOMIC DNA]</scope>
    <source>
        <strain>NCIMB 400</strain>
    </source>
</reference>
<dbReference type="EC" id="2.7.7.4" evidence="1"/>
<dbReference type="EMBL" id="CP000447">
    <property type="protein sequence ID" value="ABI73023.1"/>
    <property type="molecule type" value="Genomic_DNA"/>
</dbReference>
<dbReference type="RefSeq" id="WP_011638626.1">
    <property type="nucleotide sequence ID" value="NC_008345.1"/>
</dbReference>
<dbReference type="SMR" id="Q07Y91"/>
<dbReference type="STRING" id="318167.Sfri_3187"/>
<dbReference type="KEGG" id="sfr:Sfri_3187"/>
<dbReference type="eggNOG" id="COG0175">
    <property type="taxonomic scope" value="Bacteria"/>
</dbReference>
<dbReference type="HOGENOM" id="CLU_043026_0_0_6"/>
<dbReference type="OrthoDB" id="9772604at2"/>
<dbReference type="UniPathway" id="UPA00140">
    <property type="reaction ID" value="UER00204"/>
</dbReference>
<dbReference type="Proteomes" id="UP000000684">
    <property type="component" value="Chromosome"/>
</dbReference>
<dbReference type="GO" id="GO:0005524">
    <property type="term" value="F:ATP binding"/>
    <property type="evidence" value="ECO:0007669"/>
    <property type="project" value="UniProtKB-KW"/>
</dbReference>
<dbReference type="GO" id="GO:0004781">
    <property type="term" value="F:sulfate adenylyltransferase (ATP) activity"/>
    <property type="evidence" value="ECO:0007669"/>
    <property type="project" value="UniProtKB-UniRule"/>
</dbReference>
<dbReference type="GO" id="GO:0070814">
    <property type="term" value="P:hydrogen sulfide biosynthetic process"/>
    <property type="evidence" value="ECO:0007669"/>
    <property type="project" value="UniProtKB-UniRule"/>
</dbReference>
<dbReference type="GO" id="GO:0000103">
    <property type="term" value="P:sulfate assimilation"/>
    <property type="evidence" value="ECO:0007669"/>
    <property type="project" value="UniProtKB-UniRule"/>
</dbReference>
<dbReference type="CDD" id="cd23946">
    <property type="entry name" value="Sulfate_adenylyltransferase_2"/>
    <property type="match status" value="1"/>
</dbReference>
<dbReference type="FunFam" id="3.40.50.620:FF:000002">
    <property type="entry name" value="Sulfate adenylyltransferase subunit 2"/>
    <property type="match status" value="1"/>
</dbReference>
<dbReference type="Gene3D" id="3.40.50.620">
    <property type="entry name" value="HUPs"/>
    <property type="match status" value="1"/>
</dbReference>
<dbReference type="HAMAP" id="MF_00064">
    <property type="entry name" value="Sulf_adenylyltr_sub2"/>
    <property type="match status" value="1"/>
</dbReference>
<dbReference type="InterPro" id="IPR002500">
    <property type="entry name" value="PAPS_reduct_dom"/>
</dbReference>
<dbReference type="InterPro" id="IPR014729">
    <property type="entry name" value="Rossmann-like_a/b/a_fold"/>
</dbReference>
<dbReference type="InterPro" id="IPR011784">
    <property type="entry name" value="SO4_adenylTrfase_ssu"/>
</dbReference>
<dbReference type="InterPro" id="IPR050128">
    <property type="entry name" value="Sulfate_adenylyltrnsfr_sub2"/>
</dbReference>
<dbReference type="NCBIfam" id="TIGR02039">
    <property type="entry name" value="CysD"/>
    <property type="match status" value="1"/>
</dbReference>
<dbReference type="NCBIfam" id="NF003587">
    <property type="entry name" value="PRK05253.1"/>
    <property type="match status" value="1"/>
</dbReference>
<dbReference type="NCBIfam" id="NF009214">
    <property type="entry name" value="PRK12563.1"/>
    <property type="match status" value="1"/>
</dbReference>
<dbReference type="PANTHER" id="PTHR43196">
    <property type="entry name" value="SULFATE ADENYLYLTRANSFERASE SUBUNIT 2"/>
    <property type="match status" value="1"/>
</dbReference>
<dbReference type="PANTHER" id="PTHR43196:SF1">
    <property type="entry name" value="SULFATE ADENYLYLTRANSFERASE SUBUNIT 2"/>
    <property type="match status" value="1"/>
</dbReference>
<dbReference type="Pfam" id="PF01507">
    <property type="entry name" value="PAPS_reduct"/>
    <property type="match status" value="1"/>
</dbReference>
<dbReference type="PIRSF" id="PIRSF002936">
    <property type="entry name" value="CysDAde_trans"/>
    <property type="match status" value="1"/>
</dbReference>
<dbReference type="SUPFAM" id="SSF52402">
    <property type="entry name" value="Adenine nucleotide alpha hydrolases-like"/>
    <property type="match status" value="1"/>
</dbReference>
<protein>
    <recommendedName>
        <fullName evidence="1">Sulfate adenylyltransferase subunit 2</fullName>
        <ecNumber evidence="1">2.7.7.4</ecNumber>
    </recommendedName>
    <alternativeName>
        <fullName evidence="1">ATP-sulfurylase small subunit</fullName>
    </alternativeName>
    <alternativeName>
        <fullName evidence="1">Sulfate adenylate transferase</fullName>
        <shortName evidence="1">SAT</shortName>
    </alternativeName>
</protein>
<name>CYSD_SHEFN</name>
<accession>Q07Y91</accession>